<proteinExistence type="evidence at protein level"/>
<accession>Q27180</accession>
<accession>A0EI57</accession>
<accession>Q27247</accession>
<evidence type="ECO:0000255" key="1"/>
<evidence type="ECO:0000305" key="2"/>
<reference key="1">
    <citation type="journal article" date="1996" name="J. Biol. Chem.">
        <title>Cloning and sequence analysis of genes coding for paramecium secretory granule (trichocyst) proteins. A unique protein fold for a family of polypeptides with different primary structures.</title>
        <authorList>
            <person name="Gautier M.-C."/>
            <person name="Sperling L."/>
            <person name="Madeddu L."/>
        </authorList>
    </citation>
    <scope>NUCLEOTIDE SEQUENCE [GENOMIC DNA]</scope>
    <source>
        <strain>Stock d4-2</strain>
    </source>
</reference>
<reference key="2">
    <citation type="journal article" date="2006" name="Nature">
        <title>Global trends of whole-genome duplications revealed by the ciliate Paramecium tetraurelia.</title>
        <authorList>
            <person name="Aury J.-M."/>
            <person name="Jaillon O."/>
            <person name="Duret L."/>
            <person name="Noel B."/>
            <person name="Jubin C."/>
            <person name="Porcel B.M."/>
            <person name="Segurens B."/>
            <person name="Daubin V."/>
            <person name="Anthouard V."/>
            <person name="Aiach N."/>
            <person name="Arnaiz O."/>
            <person name="Billaut A."/>
            <person name="Beisson J."/>
            <person name="Blanc I."/>
            <person name="Bouhouche K."/>
            <person name="Camara F."/>
            <person name="Duharcourt S."/>
            <person name="Guigo R."/>
            <person name="Gogendeau D."/>
            <person name="Katinka M."/>
            <person name="Keller A.-M."/>
            <person name="Kissmehl R."/>
            <person name="Klotz C."/>
            <person name="Koll F."/>
            <person name="Le Mouel A."/>
            <person name="Lepere G."/>
            <person name="Malinsky S."/>
            <person name="Nowacki M."/>
            <person name="Nowak J.K."/>
            <person name="Plattner H."/>
            <person name="Poulain J."/>
            <person name="Ruiz F."/>
            <person name="Serrano V."/>
            <person name="Zagulski M."/>
            <person name="Dessen P."/>
            <person name="Betermier M."/>
            <person name="Weissenbach J."/>
            <person name="Scarpelli C."/>
            <person name="Schaechter V."/>
            <person name="Sperling L."/>
            <person name="Meyer E."/>
            <person name="Cohen J."/>
            <person name="Wincker P."/>
        </authorList>
    </citation>
    <scope>NUCLEOTIDE SEQUENCE [LARGE SCALE GENOMIC DNA]</scope>
    <source>
        <strain>Stock d4-2</strain>
    </source>
</reference>
<reference key="3">
    <citation type="journal article" date="1995" name="Mol. Biol. Cell">
        <title>A large multigene family codes for the polypeptides of the crystalline trichocyst matrix in Paramecium.</title>
        <authorList>
            <person name="Madeddu L."/>
            <person name="Gautier M.-C."/>
            <person name="Vayssie L."/>
            <person name="Houari A."/>
            <person name="Sperling L."/>
        </authorList>
    </citation>
    <scope>NUCLEOTIDE SEQUENCE [GENOMIC DNA] OF 226-259</scope>
    <source>
        <strain>Stock d4-2</strain>
    </source>
</reference>
<reference key="4">
    <citation type="journal article" date="1994" name="Biochimie">
        <title>Protein processing and morphogenesis of secretory granules in Paramecium.</title>
        <authorList>
            <person name="Madeddu L."/>
            <person name="Gautier M.-C."/>
            <person name="le Caer J.-P."/>
            <person name="de Loubresse N."/>
            <person name="Sperling L."/>
        </authorList>
    </citation>
    <scope>PARTIAL PROTEIN SEQUENCE</scope>
    <source>
        <strain>Stock d4-2</strain>
    </source>
</reference>
<comment type="function">
    <text>Structural protein that crystallize inside the trichocyst matrix.</text>
</comment>
<comment type="subcellular location">
    <subcellularLocation>
        <location>Trichocyst</location>
    </subcellularLocation>
    <text>These are architecturally complex secretory storage granules-docked at the plasma membrane, ready to rapidly respond to an exocytotic stimulus.</text>
</comment>
<comment type="PTM">
    <text>Two components are produced by post-translational processing from the precursor peptide.</text>
</comment>
<comment type="similarity">
    <text evidence="2">Belongs to the TMP family.</text>
</comment>
<comment type="online information" name="Protein Spotlight">
    <link uri="https://www.proteinspotlight.org/back_issues/003"/>
    <text>The arsenal of Paramecium - Issue 3 of October 2000</text>
</comment>
<dbReference type="EMBL" id="U47115">
    <property type="protein sequence ID" value="AAC47027.1"/>
    <property type="molecule type" value="Genomic_DNA"/>
</dbReference>
<dbReference type="EMBL" id="CT868680">
    <property type="protein sequence ID" value="CAK94998.1"/>
    <property type="molecule type" value="Genomic_DNA"/>
</dbReference>
<dbReference type="EMBL" id="U27504">
    <property type="protein sequence ID" value="AAA92604.1"/>
    <property type="molecule type" value="Genomic_DNA"/>
</dbReference>
<dbReference type="RefSeq" id="XP_001462371.1">
    <property type="nucleotide sequence ID" value="XM_001462334.1"/>
</dbReference>
<dbReference type="SMR" id="Q27180"/>
<dbReference type="STRING" id="5888.Q27180"/>
<dbReference type="EnsemblProtists" id="CAK94998">
    <property type="protein sequence ID" value="CAK94998"/>
    <property type="gene ID" value="GSPATT00027326001"/>
</dbReference>
<dbReference type="GeneID" id="5048156"/>
<dbReference type="KEGG" id="ptm:GSPATT00027326001"/>
<dbReference type="HOGENOM" id="CLU_065271_0_0_1"/>
<dbReference type="InParanoid" id="Q27180"/>
<dbReference type="OrthoDB" id="289935at2759"/>
<dbReference type="Proteomes" id="UP000000600">
    <property type="component" value="Partially assembled WGS sequence"/>
</dbReference>
<dbReference type="GO" id="GO:0055039">
    <property type="term" value="C:trichocyst"/>
    <property type="evidence" value="ECO:0007669"/>
    <property type="project" value="UniProtKB-SubCell"/>
</dbReference>
<sequence>MYKLAVCTLLILSVTAIDVTNSVWTSHDQKAFAQIKQSGWGNFILNFGELHLQTGGILAELNTEIAKLIDELDEELAEVHHQYARRTDVHNREVSRLEQEIQDKEREVFNAHDFYDNVLIPQRDRFAAQLEQLQENIAQNRRTLNEATVQRANDHAEFESQVAEHNEAISAIDESLQLLSQLESPSLVQIQKVQKNLTKIQQSLKRHSTFQTFIKTLLEIAVEANFADQGALREILTAFNNLRVQLVDSLNQLTADEAEAQKDFEARVIQLNQEHAEFQRAVVVKTAEIEANANKIEQTLDLIDVLHADLDTLNGQLQAENDDYAFATDVYNATVSEYNKELNAAHQALDLLNQPRFTDYVKSQLKGAF</sequence>
<keyword id="KW-0175">Coiled coil</keyword>
<keyword id="KW-0903">Direct protein sequencing</keyword>
<keyword id="KW-1185">Reference proteome</keyword>
<keyword id="KW-0732">Signal</keyword>
<name>T1B_PARTE</name>
<gene>
    <name type="primary">T1B</name>
    <name type="ORF">GSPATT00027326001</name>
</gene>
<organism>
    <name type="scientific">Paramecium tetraurelia</name>
    <dbReference type="NCBI Taxonomy" id="5888"/>
    <lineage>
        <taxon>Eukaryota</taxon>
        <taxon>Sar</taxon>
        <taxon>Alveolata</taxon>
        <taxon>Ciliophora</taxon>
        <taxon>Intramacronucleata</taxon>
        <taxon>Oligohymenophorea</taxon>
        <taxon>Peniculida</taxon>
        <taxon>Parameciidae</taxon>
        <taxon>Paramecium</taxon>
    </lineage>
</organism>
<feature type="signal peptide" evidence="1">
    <location>
        <begin position="1"/>
        <end position="16"/>
    </location>
</feature>
<feature type="propeptide" id="PRO_0000034377">
    <location>
        <begin position="17"/>
        <end position="55"/>
    </location>
</feature>
<feature type="chain" id="PRO_0000034378" description="Trichocyst matrix protein T1-B 1">
    <location>
        <begin position="56"/>
        <end position="189"/>
    </location>
</feature>
<feature type="propeptide" id="PRO_0000034379">
    <location>
        <begin position="190"/>
        <end position="225"/>
    </location>
</feature>
<feature type="chain" id="PRO_0000034380" description="Trichocyst matrix protein T1-B 2">
    <location>
        <begin position="226"/>
        <end position="369"/>
    </location>
</feature>
<feature type="coiled-coil region" evidence="1">
    <location>
        <begin position="56"/>
        <end position="180"/>
    </location>
</feature>
<feature type="coiled-coil region" evidence="1">
    <location>
        <begin position="262"/>
        <end position="354"/>
    </location>
</feature>
<protein>
    <recommendedName>
        <fullName>Trichocyst matrix protein T1-B</fullName>
    </recommendedName>
    <alternativeName>
        <fullName>Secretory granule protein T1-B</fullName>
    </alternativeName>
    <alternativeName>
        <fullName>TMP 1-B</fullName>
    </alternativeName>
    <component>
        <recommendedName>
            <fullName>Trichocyst matrix protein T1-B 1</fullName>
        </recommendedName>
    </component>
    <component>
        <recommendedName>
            <fullName>Trichocyst matrix protein T1-B 2</fullName>
        </recommendedName>
    </component>
</protein>